<protein>
    <recommendedName>
        <fullName>Nuclear speckle splicing regulatory protein 1</fullName>
    </recommendedName>
    <alternativeName>
        <fullName>Coiled-coil domain-containing protein 55</fullName>
    </alternativeName>
    <alternativeName>
        <fullName>Nuclear speckle-related protein 70</fullName>
        <shortName>NSrp70</shortName>
    </alternativeName>
</protein>
<sequence>MAIPGRQYGLILPKKTQPLHRVLQKPSVFGSDSDDDETSVSESLQREAAKKQAMKQTKLEIQKALAEDSTVYEYDSVYDEMQKKKEENNPKLLPGKDRKPKYIHNLLKAVEIRKKEQEKRMEKKIQREREMENGEFDDKEAFVTSAYKKKLEERAEEEEREKRAAALEAHLDVTKQKDLSGFYRHLLNQAVGEEAAPKSSFREARTVIKEEKLRGYPDETNSESRPPQQSCVLQRGAQEAEENPDADREFDDESSEDGEKRDHKVKSRGEDTGASMKHPKHHKNRAHSRSSSEERGLGTKHHSRGSQSRGHEHQDRQSRDQESCHKDRSHREEKSSHRHREASHKDHYWKKHEQEDKLKGREQEERQDREGKREKYSSREQERDRQRNDHDRYSEKEKKRKEKEEHTKARRERCEDSGKHREREKPEGHGQSSERHRDRRESSPRSRPKDDLDQERSSKARNTEKDKGEQGKPSHSETSLATKHRLAEERPEKGSEQERPPEAVSKFAKRSNEETVMSARDRYLARQMARINAKTYIEKEDD</sequence>
<organism>
    <name type="scientific">Mus musculus</name>
    <name type="common">Mouse</name>
    <dbReference type="NCBI Taxonomy" id="10090"/>
    <lineage>
        <taxon>Eukaryota</taxon>
        <taxon>Metazoa</taxon>
        <taxon>Chordata</taxon>
        <taxon>Craniata</taxon>
        <taxon>Vertebrata</taxon>
        <taxon>Euteleostomi</taxon>
        <taxon>Mammalia</taxon>
        <taxon>Eutheria</taxon>
        <taxon>Euarchontoglires</taxon>
        <taxon>Glires</taxon>
        <taxon>Rodentia</taxon>
        <taxon>Myomorpha</taxon>
        <taxon>Muroidea</taxon>
        <taxon>Muridae</taxon>
        <taxon>Murinae</taxon>
        <taxon>Mus</taxon>
        <taxon>Mus</taxon>
    </lineage>
</organism>
<accession>Q5NCR9</accession>
<feature type="chain" id="PRO_0000240435" description="Nuclear speckle splicing regulatory protein 1">
    <location>
        <begin position="1"/>
        <end position="542"/>
    </location>
</feature>
<feature type="region of interest" description="Disordered" evidence="5">
    <location>
        <begin position="21"/>
        <end position="53"/>
    </location>
</feature>
<feature type="region of interest" description="Necessary for alternative splicing activity" evidence="1">
    <location>
        <begin position="105"/>
        <end position="169"/>
    </location>
</feature>
<feature type="region of interest" description="Disordered" evidence="5">
    <location>
        <begin position="190"/>
        <end position="516"/>
    </location>
</feature>
<feature type="coiled-coil region" evidence="4">
    <location>
        <begin position="103"/>
        <end position="172"/>
    </location>
</feature>
<feature type="coiled-coil region" evidence="4">
    <location>
        <begin position="372"/>
        <end position="413"/>
    </location>
</feature>
<feature type="compositionally biased region" description="Basic and acidic residues" evidence="5">
    <location>
        <begin position="200"/>
        <end position="217"/>
    </location>
</feature>
<feature type="compositionally biased region" description="Polar residues" evidence="5">
    <location>
        <begin position="223"/>
        <end position="232"/>
    </location>
</feature>
<feature type="compositionally biased region" description="Acidic residues" evidence="5">
    <location>
        <begin position="239"/>
        <end position="256"/>
    </location>
</feature>
<feature type="compositionally biased region" description="Basic and acidic residues" evidence="5">
    <location>
        <begin position="257"/>
        <end position="271"/>
    </location>
</feature>
<feature type="compositionally biased region" description="Basic residues" evidence="5">
    <location>
        <begin position="277"/>
        <end position="288"/>
    </location>
</feature>
<feature type="compositionally biased region" description="Basic and acidic residues" evidence="5">
    <location>
        <begin position="309"/>
        <end position="335"/>
    </location>
</feature>
<feature type="compositionally biased region" description="Basic and acidic residues" evidence="5">
    <location>
        <begin position="343"/>
        <end position="475"/>
    </location>
</feature>
<feature type="compositionally biased region" description="Basic and acidic residues" evidence="5">
    <location>
        <begin position="485"/>
        <end position="501"/>
    </location>
</feature>
<feature type="modified residue" description="Phosphoserine" evidence="9">
    <location>
        <position position="27"/>
    </location>
</feature>
<feature type="modified residue" description="Phosphoserine" evidence="9">
    <location>
        <position position="31"/>
    </location>
</feature>
<feature type="modified residue" description="Phosphoserine" evidence="9">
    <location>
        <position position="33"/>
    </location>
</feature>
<feature type="modified residue" description="Phosphoserine" evidence="8 9">
    <location>
        <position position="254"/>
    </location>
</feature>
<feature type="modified residue" description="Phosphoserine" evidence="3">
    <location>
        <position position="255"/>
    </location>
</feature>
<feature type="modified residue" description="N6-acetyllysine" evidence="10">
    <location>
        <position position="277"/>
    </location>
</feature>
<feature type="modified residue" description="Phosphoserine" evidence="2">
    <location>
        <position position="443"/>
    </location>
</feature>
<feature type="cross-link" description="Glycyl lysine isopeptide (Lys-Gly) (interchain with G-Cter in SUMO2)" evidence="3">
    <location>
        <position position="198"/>
    </location>
</feature>
<feature type="cross-link" description="Glycyl lysine isopeptide (Lys-Gly) (interchain with G-Cter in SUMO2)" evidence="3">
    <location>
        <position position="209"/>
    </location>
</feature>
<feature type="cross-link" description="Glycyl lysine isopeptide (Lys-Gly) (interchain with G-Cter in SUMO2)" evidence="3">
    <location>
        <position position="280"/>
    </location>
</feature>
<comment type="function">
    <text evidence="1">RNA-binding protein that mediates pre-mRNA alternative splicing regulation.</text>
</comment>
<comment type="subunit">
    <text evidence="1">Interacts (via C-terminus) with SRSF1. Interacts (via C-terminus) with SRSF2 (By similarity).</text>
</comment>
<comment type="subcellular location">
    <subcellularLocation>
        <location evidence="1">Nucleus</location>
    </subcellularLocation>
    <subcellularLocation>
        <location evidence="1">Nucleus speckle</location>
    </subcellularLocation>
    <text evidence="1">Colocalizes with splicing factors SRSF1 and SRSF2 in speckles.</text>
</comment>
<comment type="disruption phenotype">
    <text evidence="6">Mice show early embryonic lethality shortly after implantation.</text>
</comment>
<comment type="similarity">
    <text evidence="7">Belongs to the NSRP1 family.</text>
</comment>
<gene>
    <name type="primary">Nsrp1</name>
    <name type="synonym">Ccdc55</name>
    <name type="synonym">Nsrp70</name>
</gene>
<reference key="1">
    <citation type="journal article" date="2005" name="Science">
        <title>The transcriptional landscape of the mammalian genome.</title>
        <authorList>
            <person name="Carninci P."/>
            <person name="Kasukawa T."/>
            <person name="Katayama S."/>
            <person name="Gough J."/>
            <person name="Frith M.C."/>
            <person name="Maeda N."/>
            <person name="Oyama R."/>
            <person name="Ravasi T."/>
            <person name="Lenhard B."/>
            <person name="Wells C."/>
            <person name="Kodzius R."/>
            <person name="Shimokawa K."/>
            <person name="Bajic V.B."/>
            <person name="Brenner S.E."/>
            <person name="Batalov S."/>
            <person name="Forrest A.R."/>
            <person name="Zavolan M."/>
            <person name="Davis M.J."/>
            <person name="Wilming L.G."/>
            <person name="Aidinis V."/>
            <person name="Allen J.E."/>
            <person name="Ambesi-Impiombato A."/>
            <person name="Apweiler R."/>
            <person name="Aturaliya R.N."/>
            <person name="Bailey T.L."/>
            <person name="Bansal M."/>
            <person name="Baxter L."/>
            <person name="Beisel K.W."/>
            <person name="Bersano T."/>
            <person name="Bono H."/>
            <person name="Chalk A.M."/>
            <person name="Chiu K.P."/>
            <person name="Choudhary V."/>
            <person name="Christoffels A."/>
            <person name="Clutterbuck D.R."/>
            <person name="Crowe M.L."/>
            <person name="Dalla E."/>
            <person name="Dalrymple B.P."/>
            <person name="de Bono B."/>
            <person name="Della Gatta G."/>
            <person name="di Bernardo D."/>
            <person name="Down T."/>
            <person name="Engstrom P."/>
            <person name="Fagiolini M."/>
            <person name="Faulkner G."/>
            <person name="Fletcher C.F."/>
            <person name="Fukushima T."/>
            <person name="Furuno M."/>
            <person name="Futaki S."/>
            <person name="Gariboldi M."/>
            <person name="Georgii-Hemming P."/>
            <person name="Gingeras T.R."/>
            <person name="Gojobori T."/>
            <person name="Green R.E."/>
            <person name="Gustincich S."/>
            <person name="Harbers M."/>
            <person name="Hayashi Y."/>
            <person name="Hensch T.K."/>
            <person name="Hirokawa N."/>
            <person name="Hill D."/>
            <person name="Huminiecki L."/>
            <person name="Iacono M."/>
            <person name="Ikeo K."/>
            <person name="Iwama A."/>
            <person name="Ishikawa T."/>
            <person name="Jakt M."/>
            <person name="Kanapin A."/>
            <person name="Katoh M."/>
            <person name="Kawasawa Y."/>
            <person name="Kelso J."/>
            <person name="Kitamura H."/>
            <person name="Kitano H."/>
            <person name="Kollias G."/>
            <person name="Krishnan S.P."/>
            <person name="Kruger A."/>
            <person name="Kummerfeld S.K."/>
            <person name="Kurochkin I.V."/>
            <person name="Lareau L.F."/>
            <person name="Lazarevic D."/>
            <person name="Lipovich L."/>
            <person name="Liu J."/>
            <person name="Liuni S."/>
            <person name="McWilliam S."/>
            <person name="Madan Babu M."/>
            <person name="Madera M."/>
            <person name="Marchionni L."/>
            <person name="Matsuda H."/>
            <person name="Matsuzawa S."/>
            <person name="Miki H."/>
            <person name="Mignone F."/>
            <person name="Miyake S."/>
            <person name="Morris K."/>
            <person name="Mottagui-Tabar S."/>
            <person name="Mulder N."/>
            <person name="Nakano N."/>
            <person name="Nakauchi H."/>
            <person name="Ng P."/>
            <person name="Nilsson R."/>
            <person name="Nishiguchi S."/>
            <person name="Nishikawa S."/>
            <person name="Nori F."/>
            <person name="Ohara O."/>
            <person name="Okazaki Y."/>
            <person name="Orlando V."/>
            <person name="Pang K.C."/>
            <person name="Pavan W.J."/>
            <person name="Pavesi G."/>
            <person name="Pesole G."/>
            <person name="Petrovsky N."/>
            <person name="Piazza S."/>
            <person name="Reed J."/>
            <person name="Reid J.F."/>
            <person name="Ring B.Z."/>
            <person name="Ringwald M."/>
            <person name="Rost B."/>
            <person name="Ruan Y."/>
            <person name="Salzberg S.L."/>
            <person name="Sandelin A."/>
            <person name="Schneider C."/>
            <person name="Schoenbach C."/>
            <person name="Sekiguchi K."/>
            <person name="Semple C.A."/>
            <person name="Seno S."/>
            <person name="Sessa L."/>
            <person name="Sheng Y."/>
            <person name="Shibata Y."/>
            <person name="Shimada H."/>
            <person name="Shimada K."/>
            <person name="Silva D."/>
            <person name="Sinclair B."/>
            <person name="Sperling S."/>
            <person name="Stupka E."/>
            <person name="Sugiura K."/>
            <person name="Sultana R."/>
            <person name="Takenaka Y."/>
            <person name="Taki K."/>
            <person name="Tammoja K."/>
            <person name="Tan S.L."/>
            <person name="Tang S."/>
            <person name="Taylor M.S."/>
            <person name="Tegner J."/>
            <person name="Teichmann S.A."/>
            <person name="Ueda H.R."/>
            <person name="van Nimwegen E."/>
            <person name="Verardo R."/>
            <person name="Wei C.L."/>
            <person name="Yagi K."/>
            <person name="Yamanishi H."/>
            <person name="Zabarovsky E."/>
            <person name="Zhu S."/>
            <person name="Zimmer A."/>
            <person name="Hide W."/>
            <person name="Bult C."/>
            <person name="Grimmond S.M."/>
            <person name="Teasdale R.D."/>
            <person name="Liu E.T."/>
            <person name="Brusic V."/>
            <person name="Quackenbush J."/>
            <person name="Wahlestedt C."/>
            <person name="Mattick J.S."/>
            <person name="Hume D.A."/>
            <person name="Kai C."/>
            <person name="Sasaki D."/>
            <person name="Tomaru Y."/>
            <person name="Fukuda S."/>
            <person name="Kanamori-Katayama M."/>
            <person name="Suzuki M."/>
            <person name="Aoki J."/>
            <person name="Arakawa T."/>
            <person name="Iida J."/>
            <person name="Imamura K."/>
            <person name="Itoh M."/>
            <person name="Kato T."/>
            <person name="Kawaji H."/>
            <person name="Kawagashira N."/>
            <person name="Kawashima T."/>
            <person name="Kojima M."/>
            <person name="Kondo S."/>
            <person name="Konno H."/>
            <person name="Nakano K."/>
            <person name="Ninomiya N."/>
            <person name="Nishio T."/>
            <person name="Okada M."/>
            <person name="Plessy C."/>
            <person name="Shibata K."/>
            <person name="Shiraki T."/>
            <person name="Suzuki S."/>
            <person name="Tagami M."/>
            <person name="Waki K."/>
            <person name="Watahiki A."/>
            <person name="Okamura-Oho Y."/>
            <person name="Suzuki H."/>
            <person name="Kawai J."/>
            <person name="Hayashizaki Y."/>
        </authorList>
    </citation>
    <scope>NUCLEOTIDE SEQUENCE [LARGE SCALE MRNA]</scope>
    <source>
        <strain>C57BL/6J</strain>
        <tissue>Heart</tissue>
    </source>
</reference>
<reference key="2">
    <citation type="journal article" date="2009" name="PLoS Biol.">
        <title>Lineage-specific biology revealed by a finished genome assembly of the mouse.</title>
        <authorList>
            <person name="Church D.M."/>
            <person name="Goodstadt L."/>
            <person name="Hillier L.W."/>
            <person name="Zody M.C."/>
            <person name="Goldstein S."/>
            <person name="She X."/>
            <person name="Bult C.J."/>
            <person name="Agarwala R."/>
            <person name="Cherry J.L."/>
            <person name="DiCuccio M."/>
            <person name="Hlavina W."/>
            <person name="Kapustin Y."/>
            <person name="Meric P."/>
            <person name="Maglott D."/>
            <person name="Birtle Z."/>
            <person name="Marques A.C."/>
            <person name="Graves T."/>
            <person name="Zhou S."/>
            <person name="Teague B."/>
            <person name="Potamousis K."/>
            <person name="Churas C."/>
            <person name="Place M."/>
            <person name="Herschleb J."/>
            <person name="Runnheim R."/>
            <person name="Forrest D."/>
            <person name="Amos-Landgraf J."/>
            <person name="Schwartz D.C."/>
            <person name="Cheng Z."/>
            <person name="Lindblad-Toh K."/>
            <person name="Eichler E.E."/>
            <person name="Ponting C.P."/>
        </authorList>
    </citation>
    <scope>NUCLEOTIDE SEQUENCE [LARGE SCALE GENOMIC DNA]</scope>
    <source>
        <strain>C57BL/6J</strain>
    </source>
</reference>
<reference key="3">
    <citation type="journal article" date="2004" name="Genome Res.">
        <title>The status, quality, and expansion of the NIH full-length cDNA project: the Mammalian Gene Collection (MGC).</title>
        <authorList>
            <consortium name="The MGC Project Team"/>
        </authorList>
    </citation>
    <scope>NUCLEOTIDE SEQUENCE [LARGE SCALE MRNA]</scope>
    <source>
        <tissue>Heart</tissue>
        <tissue>Lung</tissue>
    </source>
</reference>
<reference key="4">
    <citation type="journal article" date="2007" name="Proc. Natl. Acad. Sci. U.S.A.">
        <title>Large-scale phosphorylation analysis of mouse liver.</title>
        <authorList>
            <person name="Villen J."/>
            <person name="Beausoleil S.A."/>
            <person name="Gerber S.A."/>
            <person name="Gygi S.P."/>
        </authorList>
    </citation>
    <scope>PHOSPHORYLATION [LARGE SCALE ANALYSIS] AT SER-254</scope>
    <scope>IDENTIFICATION BY MASS SPECTROMETRY [LARGE SCALE ANALYSIS]</scope>
    <source>
        <tissue>Liver</tissue>
    </source>
</reference>
<reference key="5">
    <citation type="journal article" date="2010" name="Cell">
        <title>A tissue-specific atlas of mouse protein phosphorylation and expression.</title>
        <authorList>
            <person name="Huttlin E.L."/>
            <person name="Jedrychowski M.P."/>
            <person name="Elias J.E."/>
            <person name="Goswami T."/>
            <person name="Rad R."/>
            <person name="Beausoleil S.A."/>
            <person name="Villen J."/>
            <person name="Haas W."/>
            <person name="Sowa M.E."/>
            <person name="Gygi S.P."/>
        </authorList>
    </citation>
    <scope>PHOSPHORYLATION [LARGE SCALE ANALYSIS] AT SER-27; SER-31; SER-33 AND SER-254</scope>
    <scope>IDENTIFICATION BY MASS SPECTROMETRY [LARGE SCALE ANALYSIS]</scope>
    <source>
        <tissue>Brain</tissue>
        <tissue>Brown adipose tissue</tissue>
        <tissue>Kidney</tissue>
        <tissue>Liver</tissue>
        <tissue>Lung</tissue>
        <tissue>Pancreas</tissue>
        <tissue>Spleen</tissue>
        <tissue>Testis</tissue>
    </source>
</reference>
<reference key="6">
    <citation type="journal article" date="2011" name="Nucleic Acids Res.">
        <title>NSrp70 is a novel nuclear speckle-related protein that modulates alternative pre-mRNA splicing in vivo.</title>
        <authorList>
            <person name="Kim Y.D."/>
            <person name="Lee J.Y."/>
            <person name="Oh K.M."/>
            <person name="Araki M."/>
            <person name="Araki K."/>
            <person name="Yamamura K.I."/>
            <person name="Jun C.D."/>
        </authorList>
    </citation>
    <scope>DISRUPTION PHENOTYPE</scope>
</reference>
<reference key="7">
    <citation type="journal article" date="2013" name="Mol. Cell">
        <title>SIRT5-mediated lysine desuccinylation impacts diverse metabolic pathways.</title>
        <authorList>
            <person name="Park J."/>
            <person name="Chen Y."/>
            <person name="Tishkoff D.X."/>
            <person name="Peng C."/>
            <person name="Tan M."/>
            <person name="Dai L."/>
            <person name="Xie Z."/>
            <person name="Zhang Y."/>
            <person name="Zwaans B.M."/>
            <person name="Skinner M.E."/>
            <person name="Lombard D.B."/>
            <person name="Zhao Y."/>
        </authorList>
    </citation>
    <scope>ACETYLATION [LARGE SCALE ANALYSIS] AT LYS-277</scope>
    <scope>IDENTIFICATION BY MASS SPECTROMETRY [LARGE SCALE ANALYSIS]</scope>
    <source>
        <tissue>Embryonic fibroblast</tissue>
    </source>
</reference>
<evidence type="ECO:0000250" key="1"/>
<evidence type="ECO:0000250" key="2">
    <source>
        <dbReference type="UniProtKB" id="Q4FZU3"/>
    </source>
</evidence>
<evidence type="ECO:0000250" key="3">
    <source>
        <dbReference type="UniProtKB" id="Q9H0G5"/>
    </source>
</evidence>
<evidence type="ECO:0000255" key="4"/>
<evidence type="ECO:0000256" key="5">
    <source>
        <dbReference type="SAM" id="MobiDB-lite"/>
    </source>
</evidence>
<evidence type="ECO:0000269" key="6">
    <source>
    </source>
</evidence>
<evidence type="ECO:0000305" key="7"/>
<evidence type="ECO:0007744" key="8">
    <source>
    </source>
</evidence>
<evidence type="ECO:0007744" key="9">
    <source>
    </source>
</evidence>
<evidence type="ECO:0007744" key="10">
    <source>
    </source>
</evidence>
<name>NSRP1_MOUSE</name>
<dbReference type="EMBL" id="AK168573">
    <property type="protein sequence ID" value="BAE40443.1"/>
    <property type="molecule type" value="mRNA"/>
</dbReference>
<dbReference type="EMBL" id="AL603842">
    <property type="status" value="NOT_ANNOTATED_CDS"/>
    <property type="molecule type" value="Genomic_DNA"/>
</dbReference>
<dbReference type="EMBL" id="BC089560">
    <property type="protein sequence ID" value="AAH89560.1"/>
    <property type="molecule type" value="mRNA"/>
</dbReference>
<dbReference type="CCDS" id="CCDS25075.1"/>
<dbReference type="RefSeq" id="NP_001012309.1">
    <property type="nucleotide sequence ID" value="NM_001012309.2"/>
</dbReference>
<dbReference type="SMR" id="Q5NCR9"/>
<dbReference type="BioGRID" id="231915">
    <property type="interactions" value="3"/>
</dbReference>
<dbReference type="FunCoup" id="Q5NCR9">
    <property type="interactions" value="2882"/>
</dbReference>
<dbReference type="STRING" id="10090.ENSMUSP00000099552"/>
<dbReference type="GlyGen" id="Q5NCR9">
    <property type="glycosylation" value="1 site, 1 O-linked glycan (1 site)"/>
</dbReference>
<dbReference type="iPTMnet" id="Q5NCR9"/>
<dbReference type="PhosphoSitePlus" id="Q5NCR9"/>
<dbReference type="jPOST" id="Q5NCR9"/>
<dbReference type="PaxDb" id="10090-ENSMUSP00000099552"/>
<dbReference type="PeptideAtlas" id="Q5NCR9"/>
<dbReference type="ProteomicsDB" id="295532"/>
<dbReference type="Pumba" id="Q5NCR9"/>
<dbReference type="Antibodypedia" id="2855">
    <property type="antibodies" value="109 antibodies from 24 providers"/>
</dbReference>
<dbReference type="DNASU" id="237859"/>
<dbReference type="Ensembl" id="ENSMUST00000102494.8">
    <property type="protein sequence ID" value="ENSMUSP00000099552.2"/>
    <property type="gene ID" value="ENSMUSG00000037958.14"/>
</dbReference>
<dbReference type="GeneID" id="237859"/>
<dbReference type="KEGG" id="mmu:237859"/>
<dbReference type="UCSC" id="uc007kgg.2">
    <property type="organism name" value="mouse"/>
</dbReference>
<dbReference type="AGR" id="MGI:2144305"/>
<dbReference type="CTD" id="84081"/>
<dbReference type="MGI" id="MGI:2144305">
    <property type="gene designation" value="Nsrp1"/>
</dbReference>
<dbReference type="VEuPathDB" id="HostDB:ENSMUSG00000037958"/>
<dbReference type="eggNOG" id="KOG2117">
    <property type="taxonomic scope" value="Eukaryota"/>
</dbReference>
<dbReference type="GeneTree" id="ENSGT00940000154049"/>
<dbReference type="HOGENOM" id="CLU_548527_0_0_1"/>
<dbReference type="InParanoid" id="Q5NCR9"/>
<dbReference type="OMA" id="QSRDHEN"/>
<dbReference type="OrthoDB" id="446635at2759"/>
<dbReference type="PhylomeDB" id="Q5NCR9"/>
<dbReference type="TreeFam" id="TF319359"/>
<dbReference type="Reactome" id="R-MMU-72163">
    <property type="pathway name" value="mRNA Splicing - Major Pathway"/>
</dbReference>
<dbReference type="BioGRID-ORCS" id="237859">
    <property type="hits" value="7 hits in 43 CRISPR screens"/>
</dbReference>
<dbReference type="ChiTaRS" id="Nsrp1">
    <property type="organism name" value="mouse"/>
</dbReference>
<dbReference type="PRO" id="PR:Q5NCR9"/>
<dbReference type="Proteomes" id="UP000000589">
    <property type="component" value="Chromosome 11"/>
</dbReference>
<dbReference type="RNAct" id="Q5NCR9">
    <property type="molecule type" value="protein"/>
</dbReference>
<dbReference type="Bgee" id="ENSMUSG00000037958">
    <property type="expression patterns" value="Expressed in animal zygote and 230 other cell types or tissues"/>
</dbReference>
<dbReference type="ExpressionAtlas" id="Q5NCR9">
    <property type="expression patterns" value="baseline and differential"/>
</dbReference>
<dbReference type="GO" id="GO:0016607">
    <property type="term" value="C:nuclear speck"/>
    <property type="evidence" value="ECO:0000250"/>
    <property type="project" value="UniProtKB"/>
</dbReference>
<dbReference type="GO" id="GO:0005634">
    <property type="term" value="C:nucleus"/>
    <property type="evidence" value="ECO:0000250"/>
    <property type="project" value="UniProtKB"/>
</dbReference>
<dbReference type="GO" id="GO:1990904">
    <property type="term" value="C:ribonucleoprotein complex"/>
    <property type="evidence" value="ECO:0000250"/>
    <property type="project" value="UniProtKB"/>
</dbReference>
<dbReference type="GO" id="GO:0003729">
    <property type="term" value="F:mRNA binding"/>
    <property type="evidence" value="ECO:0000250"/>
    <property type="project" value="UniProtKB"/>
</dbReference>
<dbReference type="GO" id="GO:0032502">
    <property type="term" value="P:developmental process"/>
    <property type="evidence" value="ECO:0000250"/>
    <property type="project" value="UniProtKB"/>
</dbReference>
<dbReference type="GO" id="GO:0001701">
    <property type="term" value="P:in utero embryonic development"/>
    <property type="evidence" value="ECO:0000315"/>
    <property type="project" value="MGI"/>
</dbReference>
<dbReference type="GO" id="GO:0006397">
    <property type="term" value="P:mRNA processing"/>
    <property type="evidence" value="ECO:0007669"/>
    <property type="project" value="UniProtKB-KW"/>
</dbReference>
<dbReference type="GO" id="GO:0000381">
    <property type="term" value="P:regulation of alternative mRNA splicing, via spliceosome"/>
    <property type="evidence" value="ECO:0000250"/>
    <property type="project" value="UniProtKB"/>
</dbReference>
<dbReference type="GO" id="GO:0008380">
    <property type="term" value="P:RNA splicing"/>
    <property type="evidence" value="ECO:0007669"/>
    <property type="project" value="UniProtKB-KW"/>
</dbReference>
<dbReference type="InterPro" id="IPR046850">
    <property type="entry name" value="NRP1_C"/>
</dbReference>
<dbReference type="InterPro" id="IPR042816">
    <property type="entry name" value="Nsrp1"/>
</dbReference>
<dbReference type="InterPro" id="IPR018612">
    <property type="entry name" value="NSRP1_N"/>
</dbReference>
<dbReference type="PANTHER" id="PTHR31938">
    <property type="entry name" value="NUCLEAR SPECKLE SPLICING REGULATORY PROTEIN 1"/>
    <property type="match status" value="1"/>
</dbReference>
<dbReference type="PANTHER" id="PTHR31938:SF4">
    <property type="entry name" value="NUCLEAR SPECKLE SPLICING REGULATORY PROTEIN 1"/>
    <property type="match status" value="1"/>
</dbReference>
<dbReference type="Pfam" id="PF20427">
    <property type="entry name" value="NRP1_C"/>
    <property type="match status" value="1"/>
</dbReference>
<dbReference type="Pfam" id="PF09745">
    <property type="entry name" value="NSRP1_N"/>
    <property type="match status" value="1"/>
</dbReference>
<keyword id="KW-0007">Acetylation</keyword>
<keyword id="KW-0175">Coiled coil</keyword>
<keyword id="KW-1017">Isopeptide bond</keyword>
<keyword id="KW-0507">mRNA processing</keyword>
<keyword id="KW-0508">mRNA splicing</keyword>
<keyword id="KW-0539">Nucleus</keyword>
<keyword id="KW-0597">Phosphoprotein</keyword>
<keyword id="KW-1185">Reference proteome</keyword>
<keyword id="KW-0694">RNA-binding</keyword>
<keyword id="KW-0832">Ubl conjugation</keyword>
<proteinExistence type="evidence at protein level"/>